<organism>
    <name type="scientific">Archaeoglobus fulgidus (strain ATCC 49558 / DSM 4304 / JCM 9628 / NBRC 100126 / VC-16)</name>
    <dbReference type="NCBI Taxonomy" id="224325"/>
    <lineage>
        <taxon>Archaea</taxon>
        <taxon>Methanobacteriati</taxon>
        <taxon>Methanobacteriota</taxon>
        <taxon>Archaeoglobi</taxon>
        <taxon>Archaeoglobales</taxon>
        <taxon>Archaeoglobaceae</taxon>
        <taxon>Archaeoglobus</taxon>
    </lineage>
</organism>
<protein>
    <recommendedName>
        <fullName>Uncharacterized protein AF_0631</fullName>
    </recommendedName>
</protein>
<accession>O29624</accession>
<reference key="1">
    <citation type="journal article" date="1997" name="Nature">
        <title>The complete genome sequence of the hyperthermophilic, sulphate-reducing archaeon Archaeoglobus fulgidus.</title>
        <authorList>
            <person name="Klenk H.-P."/>
            <person name="Clayton R.A."/>
            <person name="Tomb J.-F."/>
            <person name="White O."/>
            <person name="Nelson K.E."/>
            <person name="Ketchum K.A."/>
            <person name="Dodson R.J."/>
            <person name="Gwinn M.L."/>
            <person name="Hickey E.K."/>
            <person name="Peterson J.D."/>
            <person name="Richardson D.L."/>
            <person name="Kerlavage A.R."/>
            <person name="Graham D.E."/>
            <person name="Kyrpides N.C."/>
            <person name="Fleischmann R.D."/>
            <person name="Quackenbush J."/>
            <person name="Lee N.H."/>
            <person name="Sutton G.G."/>
            <person name="Gill S.R."/>
            <person name="Kirkness E.F."/>
            <person name="Dougherty B.A."/>
            <person name="McKenney K."/>
            <person name="Adams M.D."/>
            <person name="Loftus B.J."/>
            <person name="Peterson S.N."/>
            <person name="Reich C.I."/>
            <person name="McNeil L.K."/>
            <person name="Badger J.H."/>
            <person name="Glodek A."/>
            <person name="Zhou L."/>
            <person name="Overbeek R."/>
            <person name="Gocayne J.D."/>
            <person name="Weidman J.F."/>
            <person name="McDonald L.A."/>
            <person name="Utterback T.R."/>
            <person name="Cotton M.D."/>
            <person name="Spriggs T."/>
            <person name="Artiach P."/>
            <person name="Kaine B.P."/>
            <person name="Sykes S.M."/>
            <person name="Sadow P.W."/>
            <person name="D'Andrea K.P."/>
            <person name="Bowman C."/>
            <person name="Fujii C."/>
            <person name="Garland S.A."/>
            <person name="Mason T.M."/>
            <person name="Olsen G.J."/>
            <person name="Fraser C.M."/>
            <person name="Smith H.O."/>
            <person name="Woese C.R."/>
            <person name="Venter J.C."/>
        </authorList>
    </citation>
    <scope>NUCLEOTIDE SEQUENCE [LARGE SCALE GENOMIC DNA]</scope>
    <source>
        <strain>ATCC 49558 / DSM 4304 / JCM 9628 / NBRC 100126 / VC-16</strain>
    </source>
</reference>
<dbReference type="EMBL" id="AE000782">
    <property type="protein sequence ID" value="AAB90618.1"/>
    <property type="molecule type" value="Genomic_DNA"/>
</dbReference>
<dbReference type="PIR" id="G69328">
    <property type="entry name" value="G69328"/>
</dbReference>
<dbReference type="RefSeq" id="WP_010878135.1">
    <property type="nucleotide sequence ID" value="NC_000917.1"/>
</dbReference>
<dbReference type="SMR" id="O29624"/>
<dbReference type="STRING" id="224325.AF_0631"/>
<dbReference type="PaxDb" id="224325-AF_0631"/>
<dbReference type="EnsemblBacteria" id="AAB90618">
    <property type="protein sequence ID" value="AAB90618"/>
    <property type="gene ID" value="AF_0631"/>
</dbReference>
<dbReference type="KEGG" id="afu:AF_0631"/>
<dbReference type="eggNOG" id="arCOG04925">
    <property type="taxonomic scope" value="Archaea"/>
</dbReference>
<dbReference type="HOGENOM" id="CLU_1870611_0_0_2"/>
<dbReference type="OrthoDB" id="50128at2157"/>
<dbReference type="Proteomes" id="UP000002199">
    <property type="component" value="Chromosome"/>
</dbReference>
<proteinExistence type="predicted"/>
<gene>
    <name type="ordered locus">AF_0631</name>
</gene>
<name>Y631_ARCFU</name>
<feature type="chain" id="PRO_0000127902" description="Uncharacterized protein AF_0631">
    <location>
        <begin position="1"/>
        <end position="138"/>
    </location>
</feature>
<keyword id="KW-1185">Reference proteome</keyword>
<sequence length="138" mass="15992">MIKLVEPLKKLIIDGVGVSGEEVEEQLFGGFCECGGVMYQRFWFTRDSEKILVSECEKCWKHKAMIFNSHSFVSHQSVEVLGKYDFVELLKETLGEKEFESLVRKAKNEEFDPVSYTRAKKMLTSMNLDIDEILDQVR</sequence>